<proteinExistence type="inferred from homology"/>
<name>BIOB_CLOBM</name>
<dbReference type="EC" id="2.8.1.6" evidence="1"/>
<dbReference type="EMBL" id="CP000962">
    <property type="protein sequence ID" value="ACA55752.1"/>
    <property type="molecule type" value="Genomic_DNA"/>
</dbReference>
<dbReference type="RefSeq" id="WP_012343697.1">
    <property type="nucleotide sequence ID" value="NC_010520.1"/>
</dbReference>
<dbReference type="SMR" id="B1KW08"/>
<dbReference type="KEGG" id="cbl:CLK_1702"/>
<dbReference type="HOGENOM" id="CLU_033172_2_1_9"/>
<dbReference type="UniPathway" id="UPA00078">
    <property type="reaction ID" value="UER00162"/>
</dbReference>
<dbReference type="GO" id="GO:0051537">
    <property type="term" value="F:2 iron, 2 sulfur cluster binding"/>
    <property type="evidence" value="ECO:0007669"/>
    <property type="project" value="UniProtKB-KW"/>
</dbReference>
<dbReference type="GO" id="GO:0051539">
    <property type="term" value="F:4 iron, 4 sulfur cluster binding"/>
    <property type="evidence" value="ECO:0007669"/>
    <property type="project" value="UniProtKB-KW"/>
</dbReference>
<dbReference type="GO" id="GO:0004076">
    <property type="term" value="F:biotin synthase activity"/>
    <property type="evidence" value="ECO:0007669"/>
    <property type="project" value="UniProtKB-UniRule"/>
</dbReference>
<dbReference type="GO" id="GO:0005506">
    <property type="term" value="F:iron ion binding"/>
    <property type="evidence" value="ECO:0007669"/>
    <property type="project" value="UniProtKB-UniRule"/>
</dbReference>
<dbReference type="GO" id="GO:0009102">
    <property type="term" value="P:biotin biosynthetic process"/>
    <property type="evidence" value="ECO:0007669"/>
    <property type="project" value="UniProtKB-UniRule"/>
</dbReference>
<dbReference type="CDD" id="cd01335">
    <property type="entry name" value="Radical_SAM"/>
    <property type="match status" value="1"/>
</dbReference>
<dbReference type="FunFam" id="3.20.20.70:FF:000026">
    <property type="entry name" value="Biotin synthase"/>
    <property type="match status" value="1"/>
</dbReference>
<dbReference type="Gene3D" id="3.20.20.70">
    <property type="entry name" value="Aldolase class I"/>
    <property type="match status" value="1"/>
</dbReference>
<dbReference type="HAMAP" id="MF_01694">
    <property type="entry name" value="BioB"/>
    <property type="match status" value="1"/>
</dbReference>
<dbReference type="InterPro" id="IPR013785">
    <property type="entry name" value="Aldolase_TIM"/>
</dbReference>
<dbReference type="InterPro" id="IPR010722">
    <property type="entry name" value="BATS_dom"/>
</dbReference>
<dbReference type="InterPro" id="IPR002684">
    <property type="entry name" value="Biotin_synth/BioAB"/>
</dbReference>
<dbReference type="InterPro" id="IPR024177">
    <property type="entry name" value="Biotin_synthase"/>
</dbReference>
<dbReference type="InterPro" id="IPR006638">
    <property type="entry name" value="Elp3/MiaA/NifB-like_rSAM"/>
</dbReference>
<dbReference type="InterPro" id="IPR007197">
    <property type="entry name" value="rSAM"/>
</dbReference>
<dbReference type="NCBIfam" id="TIGR00433">
    <property type="entry name" value="bioB"/>
    <property type="match status" value="1"/>
</dbReference>
<dbReference type="PANTHER" id="PTHR22976">
    <property type="entry name" value="BIOTIN SYNTHASE"/>
    <property type="match status" value="1"/>
</dbReference>
<dbReference type="PANTHER" id="PTHR22976:SF2">
    <property type="entry name" value="BIOTIN SYNTHASE, MITOCHONDRIAL"/>
    <property type="match status" value="1"/>
</dbReference>
<dbReference type="Pfam" id="PF06968">
    <property type="entry name" value="BATS"/>
    <property type="match status" value="1"/>
</dbReference>
<dbReference type="Pfam" id="PF04055">
    <property type="entry name" value="Radical_SAM"/>
    <property type="match status" value="1"/>
</dbReference>
<dbReference type="PIRSF" id="PIRSF001619">
    <property type="entry name" value="Biotin_synth"/>
    <property type="match status" value="1"/>
</dbReference>
<dbReference type="SFLD" id="SFLDG01278">
    <property type="entry name" value="biotin_synthase_like"/>
    <property type="match status" value="1"/>
</dbReference>
<dbReference type="SFLD" id="SFLDS00029">
    <property type="entry name" value="Radical_SAM"/>
    <property type="match status" value="1"/>
</dbReference>
<dbReference type="SMART" id="SM00876">
    <property type="entry name" value="BATS"/>
    <property type="match status" value="1"/>
</dbReference>
<dbReference type="SMART" id="SM00729">
    <property type="entry name" value="Elp3"/>
    <property type="match status" value="1"/>
</dbReference>
<dbReference type="SUPFAM" id="SSF102114">
    <property type="entry name" value="Radical SAM enzymes"/>
    <property type="match status" value="1"/>
</dbReference>
<dbReference type="PROSITE" id="PS51918">
    <property type="entry name" value="RADICAL_SAM"/>
    <property type="match status" value="1"/>
</dbReference>
<accession>B1KW08</accession>
<reference key="1">
    <citation type="journal article" date="2007" name="PLoS ONE">
        <title>Analysis of the neurotoxin complex genes in Clostridium botulinum A1-A4 and B1 strains: BoNT/A3, /Ba4 and /B1 clusters are located within plasmids.</title>
        <authorList>
            <person name="Smith T.J."/>
            <person name="Hill K.K."/>
            <person name="Foley B.T."/>
            <person name="Detter J.C."/>
            <person name="Munk A.C."/>
            <person name="Bruce D.C."/>
            <person name="Doggett N.A."/>
            <person name="Smith L.A."/>
            <person name="Marks J.D."/>
            <person name="Xie G."/>
            <person name="Brettin T.S."/>
        </authorList>
    </citation>
    <scope>NUCLEOTIDE SEQUENCE [LARGE SCALE GENOMIC DNA]</scope>
    <source>
        <strain>Loch Maree / Type A3</strain>
    </source>
</reference>
<feature type="chain" id="PRO_0000381316" description="Biotin synthase">
    <location>
        <begin position="1"/>
        <end position="318"/>
    </location>
</feature>
<feature type="domain" description="Radical SAM core" evidence="2">
    <location>
        <begin position="44"/>
        <end position="273"/>
    </location>
</feature>
<feature type="binding site" evidence="1">
    <location>
        <position position="62"/>
    </location>
    <ligand>
        <name>[4Fe-4S] cluster</name>
        <dbReference type="ChEBI" id="CHEBI:49883"/>
        <note>4Fe-4S-S-AdoMet</note>
    </ligand>
</feature>
<feature type="binding site" evidence="1">
    <location>
        <position position="66"/>
    </location>
    <ligand>
        <name>[4Fe-4S] cluster</name>
        <dbReference type="ChEBI" id="CHEBI:49883"/>
        <note>4Fe-4S-S-AdoMet</note>
    </ligand>
</feature>
<feature type="binding site" evidence="1">
    <location>
        <position position="69"/>
    </location>
    <ligand>
        <name>[4Fe-4S] cluster</name>
        <dbReference type="ChEBI" id="CHEBI:49883"/>
        <note>4Fe-4S-S-AdoMet</note>
    </ligand>
</feature>
<feature type="binding site" evidence="1">
    <location>
        <position position="106"/>
    </location>
    <ligand>
        <name>[2Fe-2S] cluster</name>
        <dbReference type="ChEBI" id="CHEBI:190135"/>
    </ligand>
</feature>
<feature type="binding site" evidence="1">
    <location>
        <position position="138"/>
    </location>
    <ligand>
        <name>[2Fe-2S] cluster</name>
        <dbReference type="ChEBI" id="CHEBI:190135"/>
    </ligand>
</feature>
<feature type="binding site" evidence="1">
    <location>
        <position position="198"/>
    </location>
    <ligand>
        <name>[2Fe-2S] cluster</name>
        <dbReference type="ChEBI" id="CHEBI:190135"/>
    </ligand>
</feature>
<feature type="binding site" evidence="1">
    <location>
        <position position="268"/>
    </location>
    <ligand>
        <name>[2Fe-2S] cluster</name>
        <dbReference type="ChEBI" id="CHEBI:190135"/>
    </ligand>
</feature>
<organism>
    <name type="scientific">Clostridium botulinum (strain Loch Maree / Type A3)</name>
    <dbReference type="NCBI Taxonomy" id="498214"/>
    <lineage>
        <taxon>Bacteria</taxon>
        <taxon>Bacillati</taxon>
        <taxon>Bacillota</taxon>
        <taxon>Clostridia</taxon>
        <taxon>Eubacteriales</taxon>
        <taxon>Clostridiaceae</taxon>
        <taxon>Clostridium</taxon>
    </lineage>
</organism>
<protein>
    <recommendedName>
        <fullName evidence="1">Biotin synthase</fullName>
        <ecNumber evidence="1">2.8.1.6</ecNumber>
    </recommendedName>
</protein>
<comment type="function">
    <text evidence="1">Catalyzes the conversion of dethiobiotin (DTB) to biotin by the insertion of a sulfur atom into dethiobiotin via a radical-based mechanism.</text>
</comment>
<comment type="catalytic activity">
    <reaction evidence="1">
        <text>(4R,5S)-dethiobiotin + (sulfur carrier)-SH + 2 reduced [2Fe-2S]-[ferredoxin] + 2 S-adenosyl-L-methionine = (sulfur carrier)-H + biotin + 2 5'-deoxyadenosine + 2 L-methionine + 2 oxidized [2Fe-2S]-[ferredoxin]</text>
        <dbReference type="Rhea" id="RHEA:22060"/>
        <dbReference type="Rhea" id="RHEA-COMP:10000"/>
        <dbReference type="Rhea" id="RHEA-COMP:10001"/>
        <dbReference type="Rhea" id="RHEA-COMP:14737"/>
        <dbReference type="Rhea" id="RHEA-COMP:14739"/>
        <dbReference type="ChEBI" id="CHEBI:17319"/>
        <dbReference type="ChEBI" id="CHEBI:29917"/>
        <dbReference type="ChEBI" id="CHEBI:33737"/>
        <dbReference type="ChEBI" id="CHEBI:33738"/>
        <dbReference type="ChEBI" id="CHEBI:57586"/>
        <dbReference type="ChEBI" id="CHEBI:57844"/>
        <dbReference type="ChEBI" id="CHEBI:59789"/>
        <dbReference type="ChEBI" id="CHEBI:64428"/>
        <dbReference type="ChEBI" id="CHEBI:149473"/>
        <dbReference type="EC" id="2.8.1.6"/>
    </reaction>
</comment>
<comment type="cofactor">
    <cofactor evidence="1">
        <name>[4Fe-4S] cluster</name>
        <dbReference type="ChEBI" id="CHEBI:49883"/>
    </cofactor>
    <text evidence="1">Binds 1 [4Fe-4S] cluster. The cluster is coordinated with 3 cysteines and an exchangeable S-adenosyl-L-methionine.</text>
</comment>
<comment type="cofactor">
    <cofactor evidence="1">
        <name>[2Fe-2S] cluster</name>
        <dbReference type="ChEBI" id="CHEBI:190135"/>
    </cofactor>
    <text evidence="1">Binds 1 [2Fe-2S] cluster. The cluster is coordinated with 3 cysteines and 1 arginine.</text>
</comment>
<comment type="pathway">
    <text evidence="1">Cofactor biosynthesis; biotin biosynthesis; biotin from 7,8-diaminononanoate: step 2/2.</text>
</comment>
<comment type="subunit">
    <text evidence="1">Homodimer.</text>
</comment>
<comment type="similarity">
    <text evidence="1">Belongs to the radical SAM superfamily. Biotin synthase family.</text>
</comment>
<sequence>MSNIIKYKKKILNGDLLTKEEVEELLEEGITDLAATANEIREFLCGNKFDLCTIINGKSGRCQENCKYCAQSSYFDTDIIEYNILHSDRIINSGISNYNKGVHRFSVVTSGRALNNNEVDTLCKTYSKLKEICSIRLCASHGLLKYEDLKRLKDSGVTRYHNNLETSKSFFKNICTTHTYNDKIETIKNAKKAGLEICSGGIIGLGETMEDRIDMAFTLRELSVESVPVNILNPIKGTPLENQEILSYEEIIKTLALFRFILPTVQIRLAGGRALLSDKGKKVLESGVNGAISGDMLTTLGIETSEDIKMIKNLGFEV</sequence>
<evidence type="ECO:0000255" key="1">
    <source>
        <dbReference type="HAMAP-Rule" id="MF_01694"/>
    </source>
</evidence>
<evidence type="ECO:0000255" key="2">
    <source>
        <dbReference type="PROSITE-ProRule" id="PRU01266"/>
    </source>
</evidence>
<gene>
    <name evidence="1" type="primary">bioB</name>
    <name type="ordered locus">CLK_1702</name>
</gene>
<keyword id="KW-0001">2Fe-2S</keyword>
<keyword id="KW-0004">4Fe-4S</keyword>
<keyword id="KW-0093">Biotin biosynthesis</keyword>
<keyword id="KW-0408">Iron</keyword>
<keyword id="KW-0411">Iron-sulfur</keyword>
<keyword id="KW-0479">Metal-binding</keyword>
<keyword id="KW-0949">S-adenosyl-L-methionine</keyword>
<keyword id="KW-0808">Transferase</keyword>